<accession>P01930</accession>
<feature type="initiator methionine" description="Removed" evidence="3">
    <location>
        <position position="1"/>
    </location>
</feature>
<feature type="chain" id="PRO_0000052604" description="Hemoglobin subunit alpha">
    <location>
        <begin position="2"/>
        <end position="142"/>
    </location>
</feature>
<feature type="peptide" id="PRO_0000455859" description="Hemopressin" evidence="2">
    <location>
        <begin position="96"/>
        <end position="104"/>
    </location>
</feature>
<feature type="domain" description="Globin" evidence="5">
    <location>
        <begin position="2"/>
        <end position="142"/>
    </location>
</feature>
<feature type="binding site" evidence="5">
    <location>
        <position position="59"/>
    </location>
    <ligand>
        <name>O2</name>
        <dbReference type="ChEBI" id="CHEBI:15379"/>
    </ligand>
</feature>
<feature type="binding site" description="proximal binding residue" evidence="5">
    <location>
        <position position="88"/>
    </location>
    <ligand>
        <name>heme b</name>
        <dbReference type="ChEBI" id="CHEBI:60344"/>
    </ligand>
    <ligandPart>
        <name>Fe</name>
        <dbReference type="ChEBI" id="CHEBI:18248"/>
    </ligandPart>
</feature>
<feature type="modified residue" description="Phosphoserine" evidence="4">
    <location>
        <position position="4"/>
    </location>
</feature>
<feature type="modified residue" description="N6-succinyllysine" evidence="1">
    <location>
        <position position="8"/>
    </location>
</feature>
<feature type="modified residue" description="Phosphothreonine" evidence="4">
    <location>
        <position position="9"/>
    </location>
</feature>
<feature type="modified residue" description="N6-succinyllysine" evidence="1">
    <location>
        <position position="12"/>
    </location>
</feature>
<feature type="modified residue" description="N6-acetyllysine; alternate" evidence="4">
    <location>
        <position position="17"/>
    </location>
</feature>
<feature type="modified residue" description="N6-succinyllysine; alternate" evidence="1">
    <location>
        <position position="17"/>
    </location>
</feature>
<feature type="modified residue" description="Phosphotyrosine" evidence="4">
    <location>
        <position position="25"/>
    </location>
</feature>
<feature type="modified residue" description="Phosphoserine" evidence="4">
    <location>
        <position position="36"/>
    </location>
</feature>
<feature type="modified residue" description="N6-succinyllysine" evidence="1">
    <location>
        <position position="41"/>
    </location>
</feature>
<feature type="modified residue" description="Phosphoserine" evidence="4">
    <location>
        <position position="50"/>
    </location>
</feature>
<feature type="modified residue" description="Phosphoserine" evidence="1">
    <location>
        <position position="103"/>
    </location>
</feature>
<feature type="modified residue" description="Phosphothreonine" evidence="1">
    <location>
        <position position="109"/>
    </location>
</feature>
<feature type="modified residue" description="Phosphoserine" evidence="1">
    <location>
        <position position="125"/>
    </location>
</feature>
<feature type="modified residue" description="Phosphoserine" evidence="1">
    <location>
        <position position="132"/>
    </location>
</feature>
<feature type="modified residue" description="Phosphothreonine" evidence="1">
    <location>
        <position position="135"/>
    </location>
</feature>
<feature type="modified residue" description="Phosphothreonine" evidence="1">
    <location>
        <position position="138"/>
    </location>
</feature>
<feature type="modified residue" description="Phosphoserine" evidence="1">
    <location>
        <position position="139"/>
    </location>
</feature>
<feature type="unsure residue" description="A or S">
    <location>
        <position position="71"/>
    </location>
</feature>
<feature type="unsure residue" description="S or A">
    <location>
        <position position="79"/>
    </location>
</feature>
<name>HBA_PILBA</name>
<gene>
    <name type="primary">HBA</name>
</gene>
<evidence type="ECO:0000250" key="1">
    <source>
        <dbReference type="UniProtKB" id="P01942"/>
    </source>
</evidence>
<evidence type="ECO:0000250" key="2">
    <source>
        <dbReference type="UniProtKB" id="P01946"/>
    </source>
</evidence>
<evidence type="ECO:0000250" key="3">
    <source>
        <dbReference type="UniProtKB" id="P18969"/>
    </source>
</evidence>
<evidence type="ECO:0000250" key="4">
    <source>
        <dbReference type="UniProtKB" id="P69905"/>
    </source>
</evidence>
<evidence type="ECO:0000255" key="5">
    <source>
        <dbReference type="PROSITE-ProRule" id="PRU00238"/>
    </source>
</evidence>
<proteinExistence type="evidence at protein level"/>
<keyword id="KW-0007">Acetylation</keyword>
<keyword id="KW-0903">Direct protein sequencing</keyword>
<keyword id="KW-0349">Heme</keyword>
<keyword id="KW-0408">Iron</keyword>
<keyword id="KW-0479">Metal-binding</keyword>
<keyword id="KW-0561">Oxygen transport</keyword>
<keyword id="KW-0597">Phosphoprotein</keyword>
<keyword id="KW-0813">Transport</keyword>
<reference key="1">
    <citation type="thesis" date="1973" institute="University of London" country="United Kingdom">
        <title>Structural studies of Old World monkey haemoglobins in relation to phylogeny.</title>
        <authorList>
            <person name="Hewett-Emmett D."/>
        </authorList>
    </citation>
    <scope>PROTEIN SEQUENCE OF 2-142</scope>
</reference>
<dbReference type="PIR" id="A02256">
    <property type="entry name" value="HAMQB"/>
</dbReference>
<dbReference type="SMR" id="P01930"/>
<dbReference type="GO" id="GO:0072562">
    <property type="term" value="C:blood microparticle"/>
    <property type="evidence" value="ECO:0007669"/>
    <property type="project" value="TreeGrafter"/>
</dbReference>
<dbReference type="GO" id="GO:0031838">
    <property type="term" value="C:haptoglobin-hemoglobin complex"/>
    <property type="evidence" value="ECO:0007669"/>
    <property type="project" value="TreeGrafter"/>
</dbReference>
<dbReference type="GO" id="GO:0005833">
    <property type="term" value="C:hemoglobin complex"/>
    <property type="evidence" value="ECO:0007669"/>
    <property type="project" value="InterPro"/>
</dbReference>
<dbReference type="GO" id="GO:0031720">
    <property type="term" value="F:haptoglobin binding"/>
    <property type="evidence" value="ECO:0007669"/>
    <property type="project" value="TreeGrafter"/>
</dbReference>
<dbReference type="GO" id="GO:0020037">
    <property type="term" value="F:heme binding"/>
    <property type="evidence" value="ECO:0007669"/>
    <property type="project" value="InterPro"/>
</dbReference>
<dbReference type="GO" id="GO:0005506">
    <property type="term" value="F:iron ion binding"/>
    <property type="evidence" value="ECO:0007669"/>
    <property type="project" value="InterPro"/>
</dbReference>
<dbReference type="GO" id="GO:0043177">
    <property type="term" value="F:organic acid binding"/>
    <property type="evidence" value="ECO:0007669"/>
    <property type="project" value="TreeGrafter"/>
</dbReference>
<dbReference type="GO" id="GO:0019825">
    <property type="term" value="F:oxygen binding"/>
    <property type="evidence" value="ECO:0007669"/>
    <property type="project" value="InterPro"/>
</dbReference>
<dbReference type="GO" id="GO:0005344">
    <property type="term" value="F:oxygen carrier activity"/>
    <property type="evidence" value="ECO:0007669"/>
    <property type="project" value="UniProtKB-KW"/>
</dbReference>
<dbReference type="GO" id="GO:0004601">
    <property type="term" value="F:peroxidase activity"/>
    <property type="evidence" value="ECO:0007669"/>
    <property type="project" value="TreeGrafter"/>
</dbReference>
<dbReference type="GO" id="GO:0042744">
    <property type="term" value="P:hydrogen peroxide catabolic process"/>
    <property type="evidence" value="ECO:0007669"/>
    <property type="project" value="TreeGrafter"/>
</dbReference>
<dbReference type="CDD" id="cd08927">
    <property type="entry name" value="Hb-alpha-like"/>
    <property type="match status" value="1"/>
</dbReference>
<dbReference type="FunFam" id="1.10.490.10:FF:000002">
    <property type="entry name" value="Hemoglobin subunit alpha"/>
    <property type="match status" value="1"/>
</dbReference>
<dbReference type="Gene3D" id="1.10.490.10">
    <property type="entry name" value="Globins"/>
    <property type="match status" value="1"/>
</dbReference>
<dbReference type="InterPro" id="IPR000971">
    <property type="entry name" value="Globin"/>
</dbReference>
<dbReference type="InterPro" id="IPR009050">
    <property type="entry name" value="Globin-like_sf"/>
</dbReference>
<dbReference type="InterPro" id="IPR012292">
    <property type="entry name" value="Globin/Proto"/>
</dbReference>
<dbReference type="InterPro" id="IPR002338">
    <property type="entry name" value="Hemoglobin_a-typ"/>
</dbReference>
<dbReference type="InterPro" id="IPR050056">
    <property type="entry name" value="Hemoglobin_oxygen_transport"/>
</dbReference>
<dbReference type="InterPro" id="IPR002339">
    <property type="entry name" value="Hemoglobin_pi"/>
</dbReference>
<dbReference type="PANTHER" id="PTHR11442">
    <property type="entry name" value="HEMOGLOBIN FAMILY MEMBER"/>
    <property type="match status" value="1"/>
</dbReference>
<dbReference type="PANTHER" id="PTHR11442:SF48">
    <property type="entry name" value="HEMOGLOBIN SUBUNIT ALPHA"/>
    <property type="match status" value="1"/>
</dbReference>
<dbReference type="Pfam" id="PF00042">
    <property type="entry name" value="Globin"/>
    <property type="match status" value="1"/>
</dbReference>
<dbReference type="PRINTS" id="PR00612">
    <property type="entry name" value="ALPHAHAEM"/>
</dbReference>
<dbReference type="PRINTS" id="PR00815">
    <property type="entry name" value="PIHAEM"/>
</dbReference>
<dbReference type="SUPFAM" id="SSF46458">
    <property type="entry name" value="Globin-like"/>
    <property type="match status" value="1"/>
</dbReference>
<dbReference type="PROSITE" id="PS01033">
    <property type="entry name" value="GLOBIN"/>
    <property type="match status" value="1"/>
</dbReference>
<comment type="function">
    <text>Involved in oxygen transport from the lung to the various peripheral tissues.</text>
</comment>
<comment type="function">
    <molecule>Hemopressin</molecule>
    <text evidence="2">Hemopressin acts as an antagonist peptide of the cannabinoid receptor CNR1. Hemopressin-binding efficiently blocks cannabinoid receptor CNR1 and subsequent signaling.</text>
</comment>
<comment type="subunit">
    <text>Heterotetramer of two alpha chains and two beta chains.</text>
</comment>
<comment type="tissue specificity">
    <text>Red blood cells.</text>
</comment>
<comment type="similarity">
    <text evidence="5">Belongs to the globin family.</text>
</comment>
<sequence length="142" mass="15227">MVLSPADKTNVKTAWGKVGGHGGEYGAEALERMFLSFPTTKTYFPHFDLSHGSAQVKGHGKKVADALTLAAAHVDDMPSALSALSDLHAHKLRVDPVNFKLLSHCLLVTLAAHHPAEFTPAVHASLDKFLASVSTVLTSKYR</sequence>
<organism>
    <name type="scientific">Piliocolobus badius</name>
    <name type="common">Western red colobus</name>
    <name type="synonym">Procolobus badius</name>
    <dbReference type="NCBI Taxonomy" id="164648"/>
    <lineage>
        <taxon>Eukaryota</taxon>
        <taxon>Metazoa</taxon>
        <taxon>Chordata</taxon>
        <taxon>Craniata</taxon>
        <taxon>Vertebrata</taxon>
        <taxon>Euteleostomi</taxon>
        <taxon>Mammalia</taxon>
        <taxon>Eutheria</taxon>
        <taxon>Euarchontoglires</taxon>
        <taxon>Primates</taxon>
        <taxon>Haplorrhini</taxon>
        <taxon>Catarrhini</taxon>
        <taxon>Cercopithecidae</taxon>
        <taxon>Colobinae</taxon>
        <taxon>Piliocolobus</taxon>
    </lineage>
</organism>
<protein>
    <recommendedName>
        <fullName>Hemoglobin subunit alpha</fullName>
    </recommendedName>
    <alternativeName>
        <fullName>Alpha-globin</fullName>
    </alternativeName>
    <alternativeName>
        <fullName>Hemoglobin alpha chain</fullName>
    </alternativeName>
    <component>
        <recommendedName>
            <fullName evidence="2">Hemopressin</fullName>
        </recommendedName>
    </component>
</protein>